<organism>
    <name type="scientific">Aeromonas hydrophila subsp. hydrophila (strain ATCC 7966 / DSM 30187 / BCRC 13018 / CCUG 14551 / JCM 1027 / KCTC 2358 / NCIMB 9240 / NCTC 8049)</name>
    <dbReference type="NCBI Taxonomy" id="380703"/>
    <lineage>
        <taxon>Bacteria</taxon>
        <taxon>Pseudomonadati</taxon>
        <taxon>Pseudomonadota</taxon>
        <taxon>Gammaproteobacteria</taxon>
        <taxon>Aeromonadales</taxon>
        <taxon>Aeromonadaceae</taxon>
        <taxon>Aeromonas</taxon>
    </lineage>
</organism>
<feature type="chain" id="PRO_0000291718" description="Probable D-serine dehydratase">
    <location>
        <begin position="1"/>
        <end position="443"/>
    </location>
</feature>
<feature type="modified residue" description="N6-(pyridoxal phosphate)lysine" evidence="1">
    <location>
        <position position="118"/>
    </location>
</feature>
<evidence type="ECO:0000255" key="1">
    <source>
        <dbReference type="HAMAP-Rule" id="MF_01030"/>
    </source>
</evidence>
<dbReference type="EC" id="4.3.1.18" evidence="1"/>
<dbReference type="EMBL" id="CP000462">
    <property type="protein sequence ID" value="ABK39051.1"/>
    <property type="molecule type" value="Genomic_DNA"/>
</dbReference>
<dbReference type="RefSeq" id="WP_011705339.1">
    <property type="nucleotide sequence ID" value="NC_008570.1"/>
</dbReference>
<dbReference type="RefSeq" id="YP_855977.1">
    <property type="nucleotide sequence ID" value="NC_008570.1"/>
</dbReference>
<dbReference type="SMR" id="A0KI76"/>
<dbReference type="STRING" id="380703.AHA_1438"/>
<dbReference type="EnsemblBacteria" id="ABK39051">
    <property type="protein sequence ID" value="ABK39051"/>
    <property type="gene ID" value="AHA_1438"/>
</dbReference>
<dbReference type="GeneID" id="4490624"/>
<dbReference type="KEGG" id="aha:AHA_1438"/>
<dbReference type="PATRIC" id="fig|380703.7.peg.1447"/>
<dbReference type="eggNOG" id="COG3048">
    <property type="taxonomic scope" value="Bacteria"/>
</dbReference>
<dbReference type="HOGENOM" id="CLU_035707_0_0_6"/>
<dbReference type="OrthoDB" id="9780546at2"/>
<dbReference type="Proteomes" id="UP000000756">
    <property type="component" value="Chromosome"/>
</dbReference>
<dbReference type="GO" id="GO:0008721">
    <property type="term" value="F:D-serine ammonia-lyase activity"/>
    <property type="evidence" value="ECO:0007669"/>
    <property type="project" value="UniProtKB-EC"/>
</dbReference>
<dbReference type="GO" id="GO:0016836">
    <property type="term" value="F:hydro-lyase activity"/>
    <property type="evidence" value="ECO:0007669"/>
    <property type="project" value="UniProtKB-UniRule"/>
</dbReference>
<dbReference type="GO" id="GO:0030170">
    <property type="term" value="F:pyridoxal phosphate binding"/>
    <property type="evidence" value="ECO:0007669"/>
    <property type="project" value="InterPro"/>
</dbReference>
<dbReference type="GO" id="GO:0036088">
    <property type="term" value="P:D-serine catabolic process"/>
    <property type="evidence" value="ECO:0007669"/>
    <property type="project" value="TreeGrafter"/>
</dbReference>
<dbReference type="GO" id="GO:0009097">
    <property type="term" value="P:isoleucine biosynthetic process"/>
    <property type="evidence" value="ECO:0007669"/>
    <property type="project" value="TreeGrafter"/>
</dbReference>
<dbReference type="FunFam" id="3.40.50.1100:FF:000018">
    <property type="entry name" value="D-serine dehydratase"/>
    <property type="match status" value="1"/>
</dbReference>
<dbReference type="Gene3D" id="3.40.50.1100">
    <property type="match status" value="2"/>
</dbReference>
<dbReference type="HAMAP" id="MF_01030">
    <property type="entry name" value="D_Ser_dehydrat"/>
    <property type="match status" value="1"/>
</dbReference>
<dbReference type="InterPro" id="IPR011780">
    <property type="entry name" value="D_Ser_am_lyase"/>
</dbReference>
<dbReference type="InterPro" id="IPR050147">
    <property type="entry name" value="Ser/Thr_Dehydratase"/>
</dbReference>
<dbReference type="InterPro" id="IPR000634">
    <property type="entry name" value="Ser/Thr_deHydtase_PyrdxlP-BS"/>
</dbReference>
<dbReference type="InterPro" id="IPR001926">
    <property type="entry name" value="TrpB-like_PALP"/>
</dbReference>
<dbReference type="InterPro" id="IPR036052">
    <property type="entry name" value="TrpB-like_PALP_sf"/>
</dbReference>
<dbReference type="NCBIfam" id="TIGR02035">
    <property type="entry name" value="D_Ser_am_lyase"/>
    <property type="match status" value="1"/>
</dbReference>
<dbReference type="NCBIfam" id="NF002823">
    <property type="entry name" value="PRK02991.1"/>
    <property type="match status" value="1"/>
</dbReference>
<dbReference type="PANTHER" id="PTHR48078:SF9">
    <property type="entry name" value="D-SERINE DEHYDRATASE"/>
    <property type="match status" value="1"/>
</dbReference>
<dbReference type="PANTHER" id="PTHR48078">
    <property type="entry name" value="THREONINE DEHYDRATASE, MITOCHONDRIAL-RELATED"/>
    <property type="match status" value="1"/>
</dbReference>
<dbReference type="Pfam" id="PF00291">
    <property type="entry name" value="PALP"/>
    <property type="match status" value="1"/>
</dbReference>
<dbReference type="SUPFAM" id="SSF53686">
    <property type="entry name" value="Tryptophan synthase beta subunit-like PLP-dependent enzymes"/>
    <property type="match status" value="1"/>
</dbReference>
<dbReference type="PROSITE" id="PS00165">
    <property type="entry name" value="DEHYDRATASE_SER_THR"/>
    <property type="match status" value="1"/>
</dbReference>
<gene>
    <name evidence="1" type="primary">dsdA</name>
    <name type="ordered locus">AHA_1438</name>
</gene>
<name>SDHD_AERHH</name>
<proteinExistence type="inferred from homology"/>
<protein>
    <recommendedName>
        <fullName evidence="1">Probable D-serine dehydratase</fullName>
        <ecNumber evidence="1">4.3.1.18</ecNumber>
    </recommendedName>
    <alternativeName>
        <fullName evidence="1">D-serine deaminase</fullName>
        <shortName evidence="1">DSD</shortName>
    </alternativeName>
</protein>
<reference key="1">
    <citation type="journal article" date="2006" name="J. Bacteriol.">
        <title>Genome sequence of Aeromonas hydrophila ATCC 7966T: jack of all trades.</title>
        <authorList>
            <person name="Seshadri R."/>
            <person name="Joseph S.W."/>
            <person name="Chopra A.K."/>
            <person name="Sha J."/>
            <person name="Shaw J."/>
            <person name="Graf J."/>
            <person name="Haft D.H."/>
            <person name="Wu M."/>
            <person name="Ren Q."/>
            <person name="Rosovitz M.J."/>
            <person name="Madupu R."/>
            <person name="Tallon L."/>
            <person name="Kim M."/>
            <person name="Jin S."/>
            <person name="Vuong H."/>
            <person name="Stine O.C."/>
            <person name="Ali A."/>
            <person name="Horneman A.J."/>
            <person name="Heidelberg J.F."/>
        </authorList>
    </citation>
    <scope>NUCLEOTIDE SEQUENCE [LARGE SCALE GENOMIC DNA]</scope>
    <source>
        <strain>ATCC 7966 / DSM 30187 / BCRC 13018 / CCUG 14551 / JCM 1027 / KCTC 2358 / NCIMB 9240 / NCTC 8049</strain>
    </source>
</reference>
<sequence>MKHIDVSQLTQQFPLLQSLIALEPVSWFNPKATTLVEGVPYVGLDGSDVADASARLARFAPYLCEAFPETRASKGILESDIAAIPAMQATLNQRYGVEVTGRLLLKKDSHLPISGSIKARGGIYEVLAHAEQLAIKAGLLCEEDDYRKLFTDEFRHFFGQYSIAVGSTGNLGMSIGIMSARLGFRVTVHMSADAREWKKRKLRKHGAIVVEYAEDYGVAVEQGRKEAERDPNCFFIDDENSRTLFLGYAVAGERVKKQFDDMGIVVDADHPLFVYLPCGVGGGPGGVAFGLKLAFGDNVHCLFAEPTHSPCMLLGVHTGLHDAIAVQDLGIDNLTAADGLAVGRASGFVGRAMERLLAGFYTLSDQEMYDLLGLLARAEQIKLEPSALAGMAGPWRVAANLEWQASQGLNAAKMVRATHLVWATGGGMVPAEEMENYLASAHR</sequence>
<accession>A0KI76</accession>
<keyword id="KW-0456">Lyase</keyword>
<keyword id="KW-0663">Pyridoxal phosphate</keyword>
<keyword id="KW-1185">Reference proteome</keyword>
<comment type="catalytic activity">
    <reaction evidence="1">
        <text>D-serine = pyruvate + NH4(+)</text>
        <dbReference type="Rhea" id="RHEA:13977"/>
        <dbReference type="ChEBI" id="CHEBI:15361"/>
        <dbReference type="ChEBI" id="CHEBI:28938"/>
        <dbReference type="ChEBI" id="CHEBI:35247"/>
        <dbReference type="EC" id="4.3.1.18"/>
    </reaction>
</comment>
<comment type="cofactor">
    <cofactor evidence="1">
        <name>pyridoxal 5'-phosphate</name>
        <dbReference type="ChEBI" id="CHEBI:597326"/>
    </cofactor>
</comment>
<comment type="similarity">
    <text evidence="1">Belongs to the serine/threonine dehydratase family. DsdA subfamily.</text>
</comment>